<organism>
    <name type="scientific">Zea mays</name>
    <name type="common">Maize</name>
    <dbReference type="NCBI Taxonomy" id="4577"/>
    <lineage>
        <taxon>Eukaryota</taxon>
        <taxon>Viridiplantae</taxon>
        <taxon>Streptophyta</taxon>
        <taxon>Embryophyta</taxon>
        <taxon>Tracheophyta</taxon>
        <taxon>Spermatophyta</taxon>
        <taxon>Magnoliopsida</taxon>
        <taxon>Liliopsida</taxon>
        <taxon>Poales</taxon>
        <taxon>Poaceae</taxon>
        <taxon>PACMAD clade</taxon>
        <taxon>Panicoideae</taxon>
        <taxon>Andropogonodae</taxon>
        <taxon>Andropogoneae</taxon>
        <taxon>Tripsacinae</taxon>
        <taxon>Zea</taxon>
    </lineage>
</organism>
<name>YCF70_MAIZE</name>
<proteinExistence type="inferred from homology"/>
<dbReference type="EMBL" id="X86563">
    <property type="protein sequence ID" value="CAA60273.1"/>
    <property type="molecule type" value="Genomic_DNA"/>
</dbReference>
<dbReference type="PIR" id="S58539">
    <property type="entry name" value="S58539"/>
</dbReference>
<dbReference type="RefSeq" id="NP_043012.1">
    <property type="nucleotide sequence ID" value="NC_001666.2"/>
</dbReference>
<dbReference type="SMR" id="Q33301"/>
<dbReference type="FunCoup" id="Q33301">
    <property type="interactions" value="1015"/>
</dbReference>
<dbReference type="PaxDb" id="4577-GRMZM5G813608_P01"/>
<dbReference type="KEGG" id="zma:1466359"/>
<dbReference type="eggNOG" id="ENOG502R4TM">
    <property type="taxonomic scope" value="Eukaryota"/>
</dbReference>
<dbReference type="HOGENOM" id="CLU_2779584_0_0_1"/>
<dbReference type="InParanoid" id="Q33301"/>
<dbReference type="Proteomes" id="UP000007305">
    <property type="component" value="Chloroplast"/>
</dbReference>
<dbReference type="GO" id="GO:0009507">
    <property type="term" value="C:chloroplast"/>
    <property type="evidence" value="ECO:0007669"/>
    <property type="project" value="UniProtKB-SubCell"/>
</dbReference>
<dbReference type="InterPro" id="IPR035337">
    <property type="entry name" value="Ycf70-like"/>
</dbReference>
<dbReference type="Pfam" id="PF17382">
    <property type="entry name" value="Ycf70"/>
    <property type="match status" value="1"/>
</dbReference>
<gene>
    <name type="primary">ycf70</name>
</gene>
<evidence type="ECO:0000305" key="1"/>
<accession>Q33301</accession>
<reference key="1">
    <citation type="journal article" date="1995" name="J. Mol. Biol.">
        <title>Complete sequence of the maize chloroplast genome: gene content, hotspots of divergence and fine tuning of genetic information by transcript editing.</title>
        <authorList>
            <person name="Maier R.M."/>
            <person name="Neckermann K."/>
            <person name="Igloi G.L."/>
            <person name="Koessel H."/>
        </authorList>
    </citation>
    <scope>NUCLEOTIDE SEQUENCE [LARGE SCALE GENOMIC DNA]</scope>
    <source>
        <strain>cv. B73</strain>
    </source>
</reference>
<geneLocation type="chloroplast"/>
<protein>
    <recommendedName>
        <fullName>Uncharacterized protein ycf70</fullName>
    </recommendedName>
    <alternativeName>
        <fullName>ORF69</fullName>
    </alternativeName>
</protein>
<keyword id="KW-0150">Chloroplast</keyword>
<keyword id="KW-0934">Plastid</keyword>
<keyword id="KW-1185">Reference proteome</keyword>
<comment type="subcellular location">
    <subcellularLocation>
        <location>Plastid</location>
        <location>Chloroplast</location>
    </subcellularLocation>
</comment>
<comment type="similarity">
    <text evidence="1">Belongs to the ycf70 family.</text>
</comment>
<feature type="chain" id="PRO_0000217399" description="Uncharacterized protein ycf70">
    <location>
        <begin position="1"/>
        <end position="69"/>
    </location>
</feature>
<sequence>MVLYALFYVFLVLFIFFDSFKQESNKLELSGKEERKLGNGEDRLTSDSYLLFFLSYYSLLLLSSDRRSL</sequence>